<organism>
    <name type="scientific">Homo sapiens</name>
    <name type="common">Human</name>
    <dbReference type="NCBI Taxonomy" id="9606"/>
    <lineage>
        <taxon>Eukaryota</taxon>
        <taxon>Metazoa</taxon>
        <taxon>Chordata</taxon>
        <taxon>Craniata</taxon>
        <taxon>Vertebrata</taxon>
        <taxon>Euteleostomi</taxon>
        <taxon>Mammalia</taxon>
        <taxon>Eutheria</taxon>
        <taxon>Euarchontoglires</taxon>
        <taxon>Primates</taxon>
        <taxon>Haplorrhini</taxon>
        <taxon>Catarrhini</taxon>
        <taxon>Hominidae</taxon>
        <taxon>Homo</taxon>
    </lineage>
</organism>
<sequence length="531" mass="58024">MAAVKTLNPKAEVARAQAALAVNISAARGLQDVLRTNLGPKGTMKMLVSGAGDIKLTKDGNVLLHEMQIQHPTASLIAKVATAQDDITGDGTTSNVLIIGELLKQADLYISEGLHPRIITEGFEAAKEKALQFLEEVKVSREMDRETLIDVARTSLRTKVHAELADVLTEAVVDSILAIKKQDEPIDLFMIEIMEMKHKSETDTSLIRGLVLDHGARHPDMKKRVEDAYILTCNVSLEYEKTEVNSGFFYKSAEEREKLVKAERKFIEDRVKKIIELKRKVCGDSDKGFVVINQKGIDPFSLDALSKEGIVALRRAKRRNMERLTLACGGVALNSFDDLSPDCLGHAGLVYEYTLGEEKFTFIEKCNNPRSVTLLIKGPNKHTLTQIKDAVRDGLRAVKNAIDDGCVVPGAGAVEVAMAEALIKHKPSVKGRAQLGVQAFADALLIIPKVLAQNSGFDLQETLVKIQAEHSESGQLVGVDLNTGEPMVAAEVGVWDNYCVKKQLLHSCTVIATNILLVDEIMRAGMSSLKG</sequence>
<dbReference type="EC" id="3.6.1.-" evidence="13 14 15"/>
<dbReference type="EMBL" id="L27706">
    <property type="protein sequence ID" value="AAA61061.1"/>
    <property type="molecule type" value="mRNA"/>
</dbReference>
<dbReference type="EMBL" id="AF385084">
    <property type="protein sequence ID" value="AAK61354.1"/>
    <property type="molecule type" value="mRNA"/>
</dbReference>
<dbReference type="EMBL" id="AB063318">
    <property type="protein sequence ID" value="BAB61032.1"/>
    <property type="molecule type" value="mRNA"/>
</dbReference>
<dbReference type="EMBL" id="AC092101">
    <property type="protein sequence ID" value="AAS07451.1"/>
    <property type="molecule type" value="Genomic_DNA"/>
</dbReference>
<dbReference type="EMBL" id="AC092579">
    <property type="status" value="NOT_ANNOTATED_CDS"/>
    <property type="molecule type" value="Genomic_DNA"/>
</dbReference>
<dbReference type="EMBL" id="BC106942">
    <property type="protein sequence ID" value="AAI06943.1"/>
    <property type="molecule type" value="mRNA"/>
</dbReference>
<dbReference type="EMBL" id="BU540578">
    <property type="status" value="NOT_ANNOTATED_CDS"/>
    <property type="molecule type" value="mRNA"/>
</dbReference>
<dbReference type="EMBL" id="M94083">
    <property type="protein sequence ID" value="AAA58676.1"/>
    <property type="status" value="ALT_INIT"/>
    <property type="molecule type" value="mRNA"/>
</dbReference>
<dbReference type="CCDS" id="CCDS34640.1">
    <molecule id="P40227-2"/>
</dbReference>
<dbReference type="CCDS" id="CCDS5523.1">
    <molecule id="P40227-1"/>
</dbReference>
<dbReference type="PIR" id="S48087">
    <property type="entry name" value="S48087"/>
</dbReference>
<dbReference type="RefSeq" id="NP_001009186.1">
    <molecule id="P40227-2"/>
    <property type="nucleotide sequence ID" value="NM_001009186.2"/>
</dbReference>
<dbReference type="RefSeq" id="NP_001753.1">
    <molecule id="P40227-1"/>
    <property type="nucleotide sequence ID" value="NM_001762.4"/>
</dbReference>
<dbReference type="PDB" id="6NR8">
    <property type="method" value="EM"/>
    <property type="resolution" value="7.80 A"/>
    <property type="chains" value="F/N=11-525"/>
</dbReference>
<dbReference type="PDB" id="6NR9">
    <property type="method" value="EM"/>
    <property type="resolution" value="8.50 A"/>
    <property type="chains" value="F/N=11-525"/>
</dbReference>
<dbReference type="PDB" id="6NRA">
    <property type="method" value="EM"/>
    <property type="resolution" value="7.70 A"/>
    <property type="chains" value="F/N=11-525"/>
</dbReference>
<dbReference type="PDB" id="6NRB">
    <property type="method" value="EM"/>
    <property type="resolution" value="8.70 A"/>
    <property type="chains" value="F/N=11-525"/>
</dbReference>
<dbReference type="PDB" id="6NRC">
    <property type="method" value="EM"/>
    <property type="resolution" value="8.30 A"/>
    <property type="chains" value="F/N=11-525"/>
</dbReference>
<dbReference type="PDB" id="6NRD">
    <property type="method" value="EM"/>
    <property type="resolution" value="8.20 A"/>
    <property type="chains" value="F/N=11-525"/>
</dbReference>
<dbReference type="PDB" id="6QB8">
    <property type="method" value="EM"/>
    <property type="resolution" value="3.97 A"/>
    <property type="chains" value="Z/z=1-531"/>
</dbReference>
<dbReference type="PDB" id="7LUM">
    <property type="method" value="EM"/>
    <property type="resolution" value="4.50 A"/>
    <property type="chains" value="A/I=1-531"/>
</dbReference>
<dbReference type="PDB" id="7LUP">
    <property type="method" value="EM"/>
    <property type="resolution" value="6.20 A"/>
    <property type="chains" value="A/I=1-531"/>
</dbReference>
<dbReference type="PDB" id="7NVL">
    <property type="method" value="EM"/>
    <property type="resolution" value="2.50 A"/>
    <property type="chains" value="Z/z=1-531"/>
</dbReference>
<dbReference type="PDB" id="7NVM">
    <property type="method" value="EM"/>
    <property type="resolution" value="3.10 A"/>
    <property type="chains" value="Z/z=1-531"/>
</dbReference>
<dbReference type="PDB" id="7NVN">
    <property type="method" value="EM"/>
    <property type="resolution" value="3.00 A"/>
    <property type="chains" value="Z/z=1-531"/>
</dbReference>
<dbReference type="PDB" id="7NVO">
    <property type="method" value="EM"/>
    <property type="resolution" value="3.50 A"/>
    <property type="chains" value="Z/z=1-531"/>
</dbReference>
<dbReference type="PDB" id="7TRG">
    <property type="method" value="EM"/>
    <property type="resolution" value="3.00 A"/>
    <property type="chains" value="I=1-531"/>
</dbReference>
<dbReference type="PDB" id="7TTN">
    <property type="method" value="EM"/>
    <property type="resolution" value="3.30 A"/>
    <property type="chains" value="I=1-531"/>
</dbReference>
<dbReference type="PDB" id="7TTT">
    <property type="method" value="EM"/>
    <property type="resolution" value="2.90 A"/>
    <property type="chains" value="I=1-531"/>
</dbReference>
<dbReference type="PDB" id="7TUB">
    <property type="method" value="EM"/>
    <property type="resolution" value="3.60 A"/>
    <property type="chains" value="I=1-531"/>
</dbReference>
<dbReference type="PDB" id="7WU7">
    <property type="method" value="EM"/>
    <property type="resolution" value="3.85 A"/>
    <property type="chains" value="F/N=1-531"/>
</dbReference>
<dbReference type="PDB" id="7WZ3">
    <property type="method" value="EM"/>
    <property type="resolution" value="4.10 A"/>
    <property type="chains" value="Z/z=1-531"/>
</dbReference>
<dbReference type="PDB" id="7X0A">
    <property type="method" value="EM"/>
    <property type="resolution" value="3.10 A"/>
    <property type="chains" value="Z/z=1-531"/>
</dbReference>
<dbReference type="PDB" id="7X0S">
    <property type="method" value="EM"/>
    <property type="resolution" value="3.10 A"/>
    <property type="chains" value="K/z=1-531"/>
</dbReference>
<dbReference type="PDB" id="7X0V">
    <property type="method" value="EM"/>
    <property type="resolution" value="3.20 A"/>
    <property type="chains" value="K/z=1-531"/>
</dbReference>
<dbReference type="PDB" id="7X3J">
    <property type="method" value="EM"/>
    <property type="resolution" value="4.20 A"/>
    <property type="chains" value="Z/z=1-531"/>
</dbReference>
<dbReference type="PDB" id="7X3U">
    <property type="method" value="EM"/>
    <property type="resolution" value="3.30 A"/>
    <property type="chains" value="Z/z=1-531"/>
</dbReference>
<dbReference type="PDB" id="7X6Q">
    <property type="method" value="EM"/>
    <property type="resolution" value="4.50 A"/>
    <property type="chains" value="K/z=1-531"/>
</dbReference>
<dbReference type="PDB" id="7X7Y">
    <property type="method" value="EM"/>
    <property type="resolution" value="3.80 A"/>
    <property type="chains" value="Z/z=1-531"/>
</dbReference>
<dbReference type="PDB" id="8HKI">
    <property type="method" value="EM"/>
    <property type="resolution" value="3.10 A"/>
    <property type="chains" value="Z/z=1-531"/>
</dbReference>
<dbReference type="PDB" id="8I1U">
    <property type="method" value="EM"/>
    <property type="resolution" value="3.24 A"/>
    <property type="chains" value="F/N=1-531"/>
</dbReference>
<dbReference type="PDB" id="8I9U">
    <property type="method" value="EM"/>
    <property type="resolution" value="3.10 A"/>
    <property type="chains" value="F/N=1-531"/>
</dbReference>
<dbReference type="PDB" id="8IB8">
    <property type="method" value="EM"/>
    <property type="resolution" value="4.42 A"/>
    <property type="chains" value="F/N=1-531"/>
</dbReference>
<dbReference type="PDB" id="8SFE">
    <property type="method" value="EM"/>
    <property type="resolution" value="3.36 A"/>
    <property type="chains" value="Z/z=17-524"/>
</dbReference>
<dbReference type="PDB" id="8SFF">
    <property type="method" value="EM"/>
    <property type="resolution" value="3.20 A"/>
    <property type="chains" value="Z/z=1-527"/>
</dbReference>
<dbReference type="PDB" id="8SG8">
    <property type="method" value="EM"/>
    <property type="resolution" value="3.00 A"/>
    <property type="chains" value="Z/z=1-527"/>
</dbReference>
<dbReference type="PDB" id="8SG9">
    <property type="method" value="EM"/>
    <property type="resolution" value="2.90 A"/>
    <property type="chains" value="Z/z=1-527"/>
</dbReference>
<dbReference type="PDB" id="8SGC">
    <property type="method" value="EM"/>
    <property type="resolution" value="2.90 A"/>
    <property type="chains" value="Z/z=1-527"/>
</dbReference>
<dbReference type="PDB" id="8SGL">
    <property type="method" value="EM"/>
    <property type="resolution" value="2.90 A"/>
    <property type="chains" value="Z/z=1-527"/>
</dbReference>
<dbReference type="PDB" id="8SGQ">
    <property type="method" value="EM"/>
    <property type="resolution" value="3.70 A"/>
    <property type="chains" value="Z/z=17-524"/>
</dbReference>
<dbReference type="PDB" id="8SH9">
    <property type="method" value="EM"/>
    <property type="resolution" value="2.70 A"/>
    <property type="chains" value="Z/z=1-527"/>
</dbReference>
<dbReference type="PDB" id="8SHA">
    <property type="method" value="EM"/>
    <property type="resolution" value="3.00 A"/>
    <property type="chains" value="Z/z=1-527"/>
</dbReference>
<dbReference type="PDB" id="8SHD">
    <property type="method" value="EM"/>
    <property type="resolution" value="2.90 A"/>
    <property type="chains" value="Z/z=1-527"/>
</dbReference>
<dbReference type="PDB" id="8SHE">
    <property type="method" value="EM"/>
    <property type="resolution" value="2.80 A"/>
    <property type="chains" value="Z/z=1-527"/>
</dbReference>
<dbReference type="PDB" id="8SHF">
    <property type="method" value="EM"/>
    <property type="resolution" value="3.00 A"/>
    <property type="chains" value="Z/z=1-527"/>
</dbReference>
<dbReference type="PDB" id="8SHG">
    <property type="method" value="EM"/>
    <property type="resolution" value="2.80 A"/>
    <property type="chains" value="Z/z=1-527"/>
</dbReference>
<dbReference type="PDB" id="8SHL">
    <property type="method" value="EM"/>
    <property type="resolution" value="3.00 A"/>
    <property type="chains" value="Z/z=1-527"/>
</dbReference>
<dbReference type="PDB" id="8SHN">
    <property type="method" value="EM"/>
    <property type="resolution" value="2.80 A"/>
    <property type="chains" value="Z/z=1-527"/>
</dbReference>
<dbReference type="PDB" id="8SHO">
    <property type="method" value="EM"/>
    <property type="resolution" value="3.00 A"/>
    <property type="chains" value="Z/z=1-527"/>
</dbReference>
<dbReference type="PDB" id="8SHP">
    <property type="method" value="EM"/>
    <property type="resolution" value="3.00 A"/>
    <property type="chains" value="Z/z=1-527"/>
</dbReference>
<dbReference type="PDB" id="8SHQ">
    <property type="method" value="EM"/>
    <property type="resolution" value="2.90 A"/>
    <property type="chains" value="Z/z=1-527"/>
</dbReference>
<dbReference type="PDB" id="8SHT">
    <property type="method" value="EM"/>
    <property type="resolution" value="3.00 A"/>
    <property type="chains" value="Z/z=1-527"/>
</dbReference>
<dbReference type="PDBsum" id="6NR8"/>
<dbReference type="PDBsum" id="6NR9"/>
<dbReference type="PDBsum" id="6NRA"/>
<dbReference type="PDBsum" id="6NRB"/>
<dbReference type="PDBsum" id="6NRC"/>
<dbReference type="PDBsum" id="6NRD"/>
<dbReference type="PDBsum" id="6QB8"/>
<dbReference type="PDBsum" id="7LUM"/>
<dbReference type="PDBsum" id="7LUP"/>
<dbReference type="PDBsum" id="7NVL"/>
<dbReference type="PDBsum" id="7NVM"/>
<dbReference type="PDBsum" id="7NVN"/>
<dbReference type="PDBsum" id="7NVO"/>
<dbReference type="PDBsum" id="7TRG"/>
<dbReference type="PDBsum" id="7TTN"/>
<dbReference type="PDBsum" id="7TTT"/>
<dbReference type="PDBsum" id="7TUB"/>
<dbReference type="PDBsum" id="7WU7"/>
<dbReference type="PDBsum" id="7WZ3"/>
<dbReference type="PDBsum" id="7X0A"/>
<dbReference type="PDBsum" id="7X0S"/>
<dbReference type="PDBsum" id="7X0V"/>
<dbReference type="PDBsum" id="7X3J"/>
<dbReference type="PDBsum" id="7X3U"/>
<dbReference type="PDBsum" id="7X6Q"/>
<dbReference type="PDBsum" id="7X7Y"/>
<dbReference type="PDBsum" id="8HKI"/>
<dbReference type="PDBsum" id="8I1U"/>
<dbReference type="PDBsum" id="8I9U"/>
<dbReference type="PDBsum" id="8IB8"/>
<dbReference type="PDBsum" id="8SFE"/>
<dbReference type="PDBsum" id="8SFF"/>
<dbReference type="PDBsum" id="8SG8"/>
<dbReference type="PDBsum" id="8SG9"/>
<dbReference type="PDBsum" id="8SGC"/>
<dbReference type="PDBsum" id="8SGL"/>
<dbReference type="PDBsum" id="8SGQ"/>
<dbReference type="PDBsum" id="8SH9"/>
<dbReference type="PDBsum" id="8SHA"/>
<dbReference type="PDBsum" id="8SHD"/>
<dbReference type="PDBsum" id="8SHE"/>
<dbReference type="PDBsum" id="8SHF"/>
<dbReference type="PDBsum" id="8SHG"/>
<dbReference type="PDBsum" id="8SHL"/>
<dbReference type="PDBsum" id="8SHN"/>
<dbReference type="PDBsum" id="8SHO"/>
<dbReference type="PDBsum" id="8SHP"/>
<dbReference type="PDBsum" id="8SHQ"/>
<dbReference type="PDBsum" id="8SHT"/>
<dbReference type="EMDB" id="EMD-0490"/>
<dbReference type="EMDB" id="EMD-0491"/>
<dbReference type="EMDB" id="EMD-0492"/>
<dbReference type="EMDB" id="EMD-0493"/>
<dbReference type="EMDB" id="EMD-0494"/>
<dbReference type="EMDB" id="EMD-0495"/>
<dbReference type="EMDB" id="EMD-12605"/>
<dbReference type="EMDB" id="EMD-12606"/>
<dbReference type="EMDB" id="EMD-12607"/>
<dbReference type="EMDB" id="EMD-12608"/>
<dbReference type="EMDB" id="EMD-13754"/>
<dbReference type="EMDB" id="EMD-23522"/>
<dbReference type="EMDB" id="EMD-23526"/>
<dbReference type="EMDB" id="EMD-26089"/>
<dbReference type="EMDB" id="EMD-26120"/>
<dbReference type="EMDB" id="EMD-26123"/>
<dbReference type="EMDB" id="EMD-26131"/>
<dbReference type="EMDB" id="EMD-32823"/>
<dbReference type="EMDB" id="EMD-32903"/>
<dbReference type="EMDB" id="EMD-32922"/>
<dbReference type="EMDB" id="EMD-32923"/>
<dbReference type="EMDB" id="EMD-32926"/>
<dbReference type="EMDB" id="EMD-32989"/>
<dbReference type="EMDB" id="EMD-32993"/>
<dbReference type="EMDB" id="EMD-33025"/>
<dbReference type="EMDB" id="EMD-33053"/>
<dbReference type="EMDB" id="EMD-34852"/>
<dbReference type="EMDB" id="EMD-35122"/>
<dbReference type="EMDB" id="EMD-35284"/>
<dbReference type="EMDB" id="EMD-35335"/>
<dbReference type="EMDB" id="EMD-40439"/>
<dbReference type="EMDB" id="EMD-40440"/>
<dbReference type="EMDB" id="EMD-40452"/>
<dbReference type="EMDB" id="EMD-40453"/>
<dbReference type="EMDB" id="EMD-40454"/>
<dbReference type="EMDB" id="EMD-40461"/>
<dbReference type="EMDB" id="EMD-40464"/>
<dbReference type="EMDB" id="EMD-40481"/>
<dbReference type="EMDB" id="EMD-40482"/>
<dbReference type="EMDB" id="EMD-40484"/>
<dbReference type="EMDB" id="EMD-40485"/>
<dbReference type="EMDB" id="EMD-40486"/>
<dbReference type="EMDB" id="EMD-40487"/>
<dbReference type="EMDB" id="EMD-40488"/>
<dbReference type="EMDB" id="EMD-40489"/>
<dbReference type="EMDB" id="EMD-40490"/>
<dbReference type="EMDB" id="EMD-40491"/>
<dbReference type="EMDB" id="EMD-40492"/>
<dbReference type="EMDB" id="EMD-40494"/>
<dbReference type="EMDB" id="EMD-4489"/>
<dbReference type="SMR" id="P40227"/>
<dbReference type="BioGRID" id="107346">
    <property type="interactions" value="626"/>
</dbReference>
<dbReference type="ComplexPortal" id="CPX-6030">
    <property type="entry name" value="Chaperonin-containing T-complex"/>
</dbReference>
<dbReference type="CORUM" id="P40227"/>
<dbReference type="DIP" id="DIP-33558N"/>
<dbReference type="FunCoup" id="P40227">
    <property type="interactions" value="2709"/>
</dbReference>
<dbReference type="IntAct" id="P40227">
    <property type="interactions" value="363"/>
</dbReference>
<dbReference type="MINT" id="P40227"/>
<dbReference type="STRING" id="9606.ENSP00000275603"/>
<dbReference type="GlyGen" id="P40227">
    <property type="glycosylation" value="1 site, 1 O-linked glycan (1 site)"/>
</dbReference>
<dbReference type="iPTMnet" id="P40227"/>
<dbReference type="MetOSite" id="P40227"/>
<dbReference type="PhosphoSitePlus" id="P40227"/>
<dbReference type="SwissPalm" id="P40227"/>
<dbReference type="BioMuta" id="CCT6A"/>
<dbReference type="DMDM" id="730922"/>
<dbReference type="REPRODUCTION-2DPAGE" id="IPI00027626"/>
<dbReference type="REPRODUCTION-2DPAGE" id="P40227"/>
<dbReference type="CPTAC" id="CPTAC-1643"/>
<dbReference type="CPTAC" id="CPTAC-41"/>
<dbReference type="CPTAC" id="CPTAC-42"/>
<dbReference type="jPOST" id="P40227"/>
<dbReference type="MassIVE" id="P40227"/>
<dbReference type="PaxDb" id="9606-ENSP00000275603"/>
<dbReference type="PeptideAtlas" id="P40227"/>
<dbReference type="PRIDE" id="P40227"/>
<dbReference type="ProteomicsDB" id="55353">
    <molecule id="P40227-1"/>
</dbReference>
<dbReference type="ProteomicsDB" id="824"/>
<dbReference type="Pumba" id="P40227"/>
<dbReference type="Antibodypedia" id="44791">
    <property type="antibodies" value="153 antibodies from 26 providers"/>
</dbReference>
<dbReference type="DNASU" id="908"/>
<dbReference type="Ensembl" id="ENST00000275603.9">
    <molecule id="P40227-1"/>
    <property type="protein sequence ID" value="ENSP00000275603.4"/>
    <property type="gene ID" value="ENSG00000146731.11"/>
</dbReference>
<dbReference type="Ensembl" id="ENST00000335503.3">
    <molecule id="P40227-2"/>
    <property type="protein sequence ID" value="ENSP00000352019.2"/>
    <property type="gene ID" value="ENSG00000146731.11"/>
</dbReference>
<dbReference type="GeneID" id="908"/>
<dbReference type="KEGG" id="hsa:908"/>
<dbReference type="MANE-Select" id="ENST00000275603.9">
    <property type="protein sequence ID" value="ENSP00000275603.4"/>
    <property type="RefSeq nucleotide sequence ID" value="NM_001762.4"/>
    <property type="RefSeq protein sequence ID" value="NP_001753.1"/>
</dbReference>
<dbReference type="UCSC" id="uc003trl.2">
    <molecule id="P40227-1"/>
    <property type="organism name" value="human"/>
</dbReference>
<dbReference type="AGR" id="HGNC:1620"/>
<dbReference type="CTD" id="908"/>
<dbReference type="DisGeNET" id="908"/>
<dbReference type="GeneCards" id="CCT6A"/>
<dbReference type="HGNC" id="HGNC:1620">
    <property type="gene designation" value="CCT6A"/>
</dbReference>
<dbReference type="HPA" id="ENSG00000146731">
    <property type="expression patterns" value="Low tissue specificity"/>
</dbReference>
<dbReference type="MIM" id="104613">
    <property type="type" value="gene"/>
</dbReference>
<dbReference type="neXtProt" id="NX_P40227"/>
<dbReference type="OpenTargets" id="ENSG00000146731"/>
<dbReference type="PharmGKB" id="PA26183"/>
<dbReference type="VEuPathDB" id="HostDB:ENSG00000146731"/>
<dbReference type="eggNOG" id="KOG0359">
    <property type="taxonomic scope" value="Eukaryota"/>
</dbReference>
<dbReference type="GeneTree" id="ENSGT00940000154631"/>
<dbReference type="HOGENOM" id="CLU_008891_3_1_1"/>
<dbReference type="InParanoid" id="P40227"/>
<dbReference type="OMA" id="LHPRIMT"/>
<dbReference type="OrthoDB" id="10052040at2759"/>
<dbReference type="PAN-GO" id="P40227">
    <property type="GO annotations" value="3 GO annotations based on evolutionary models"/>
</dbReference>
<dbReference type="PhylomeDB" id="P40227"/>
<dbReference type="TreeFam" id="TF106333"/>
<dbReference type="BRENDA" id="3.6.4.B10">
    <property type="organism ID" value="2681"/>
</dbReference>
<dbReference type="PathwayCommons" id="P40227"/>
<dbReference type="Reactome" id="R-HSA-389957">
    <property type="pathway name" value="Prefoldin mediated transfer of substrate to CCT/TriC"/>
</dbReference>
<dbReference type="Reactome" id="R-HSA-389960">
    <property type="pathway name" value="Formation of tubulin folding intermediates by CCT/TriC"/>
</dbReference>
<dbReference type="Reactome" id="R-HSA-390450">
    <property type="pathway name" value="Folding of actin by CCT/TriC"/>
</dbReference>
<dbReference type="Reactome" id="R-HSA-390471">
    <property type="pathway name" value="Association of TriC/CCT with target proteins during biosynthesis"/>
</dbReference>
<dbReference type="Reactome" id="R-HSA-6814122">
    <property type="pathway name" value="Cooperation of PDCL (PhLP1) and TRiC/CCT in G-protein beta folding"/>
</dbReference>
<dbReference type="Reactome" id="R-HSA-9013418">
    <property type="pathway name" value="RHOBTB2 GTPase cycle"/>
</dbReference>
<dbReference type="SignaLink" id="P40227"/>
<dbReference type="SIGNOR" id="P40227"/>
<dbReference type="BioGRID-ORCS" id="908">
    <property type="hits" value="785 hits in 1151 CRISPR screens"/>
</dbReference>
<dbReference type="CD-CODE" id="91857CE7">
    <property type="entry name" value="Nucleolus"/>
</dbReference>
<dbReference type="CD-CODE" id="DEE660B4">
    <property type="entry name" value="Stress granule"/>
</dbReference>
<dbReference type="CD-CODE" id="FB4E32DD">
    <property type="entry name" value="Presynaptic clusters and postsynaptic densities"/>
</dbReference>
<dbReference type="ChiTaRS" id="CCT6A">
    <property type="organism name" value="human"/>
</dbReference>
<dbReference type="GeneWiki" id="CCT6A"/>
<dbReference type="GenomeRNAi" id="908"/>
<dbReference type="Pharos" id="P40227">
    <property type="development level" value="Tbio"/>
</dbReference>
<dbReference type="PRO" id="PR:P40227"/>
<dbReference type="Proteomes" id="UP000005640">
    <property type="component" value="Chromosome 7"/>
</dbReference>
<dbReference type="RNAct" id="P40227">
    <property type="molecule type" value="protein"/>
</dbReference>
<dbReference type="Bgee" id="ENSG00000146731">
    <property type="expression patterns" value="Expressed in primordial germ cell in gonad and 208 other cell types or tissues"/>
</dbReference>
<dbReference type="ExpressionAtlas" id="P40227">
    <property type="expression patterns" value="baseline and differential"/>
</dbReference>
<dbReference type="GO" id="GO:0005832">
    <property type="term" value="C:chaperonin-containing T-complex"/>
    <property type="evidence" value="ECO:0000314"/>
    <property type="project" value="UniProtKB"/>
</dbReference>
<dbReference type="GO" id="GO:0005737">
    <property type="term" value="C:cytoplasm"/>
    <property type="evidence" value="ECO:0000304"/>
    <property type="project" value="ProtInc"/>
</dbReference>
<dbReference type="GO" id="GO:0005829">
    <property type="term" value="C:cytosol"/>
    <property type="evidence" value="ECO:0000314"/>
    <property type="project" value="HPA"/>
</dbReference>
<dbReference type="GO" id="GO:0070062">
    <property type="term" value="C:extracellular exosome"/>
    <property type="evidence" value="ECO:0007005"/>
    <property type="project" value="UniProtKB"/>
</dbReference>
<dbReference type="GO" id="GO:0005874">
    <property type="term" value="C:microtubule"/>
    <property type="evidence" value="ECO:0000314"/>
    <property type="project" value="UniProtKB"/>
</dbReference>
<dbReference type="GO" id="GO:0005524">
    <property type="term" value="F:ATP binding"/>
    <property type="evidence" value="ECO:0007669"/>
    <property type="project" value="UniProtKB-KW"/>
</dbReference>
<dbReference type="GO" id="GO:0016887">
    <property type="term" value="F:ATP hydrolysis activity"/>
    <property type="evidence" value="ECO:0007669"/>
    <property type="project" value="InterPro"/>
</dbReference>
<dbReference type="GO" id="GO:0140662">
    <property type="term" value="F:ATP-dependent protein folding chaperone"/>
    <property type="evidence" value="ECO:0007669"/>
    <property type="project" value="InterPro"/>
</dbReference>
<dbReference type="GO" id="GO:0044183">
    <property type="term" value="F:protein folding chaperone"/>
    <property type="evidence" value="ECO:0000314"/>
    <property type="project" value="BHF-UCL"/>
</dbReference>
<dbReference type="GO" id="GO:0003723">
    <property type="term" value="F:RNA binding"/>
    <property type="evidence" value="ECO:0007005"/>
    <property type="project" value="UniProtKB"/>
</dbReference>
<dbReference type="GO" id="GO:0051082">
    <property type="term" value="F:unfolded protein binding"/>
    <property type="evidence" value="ECO:0000318"/>
    <property type="project" value="GO_Central"/>
</dbReference>
<dbReference type="GO" id="GO:0071987">
    <property type="term" value="F:WD40-repeat domain binding"/>
    <property type="evidence" value="ECO:0000353"/>
    <property type="project" value="BHF-UCL"/>
</dbReference>
<dbReference type="GO" id="GO:0051086">
    <property type="term" value="P:chaperone mediated protein folding independent of cofactor"/>
    <property type="evidence" value="ECO:0000315"/>
    <property type="project" value="BHF-UCL"/>
</dbReference>
<dbReference type="GO" id="GO:0061077">
    <property type="term" value="P:chaperone-mediated protein folding"/>
    <property type="evidence" value="ECO:0000314"/>
    <property type="project" value="ComplexPortal"/>
</dbReference>
<dbReference type="GO" id="GO:1904851">
    <property type="term" value="P:positive regulation of establishment of protein localization to telomere"/>
    <property type="evidence" value="ECO:0000315"/>
    <property type="project" value="BHF-UCL"/>
</dbReference>
<dbReference type="GO" id="GO:1904871">
    <property type="term" value="P:positive regulation of protein localization to Cajal body"/>
    <property type="evidence" value="ECO:0007001"/>
    <property type="project" value="BHF-UCL"/>
</dbReference>
<dbReference type="GO" id="GO:1904874">
    <property type="term" value="P:positive regulation of telomerase RNA localization to Cajal body"/>
    <property type="evidence" value="ECO:0007001"/>
    <property type="project" value="BHF-UCL"/>
</dbReference>
<dbReference type="GO" id="GO:0032212">
    <property type="term" value="P:positive regulation of telomere maintenance via telomerase"/>
    <property type="evidence" value="ECO:0000315"/>
    <property type="project" value="BHF-UCL"/>
</dbReference>
<dbReference type="GO" id="GO:0006457">
    <property type="term" value="P:protein folding"/>
    <property type="evidence" value="ECO:0000314"/>
    <property type="project" value="FlyBase"/>
</dbReference>
<dbReference type="GO" id="GO:0050821">
    <property type="term" value="P:protein stabilization"/>
    <property type="evidence" value="ECO:0000315"/>
    <property type="project" value="BHF-UCL"/>
</dbReference>
<dbReference type="CDD" id="cd03342">
    <property type="entry name" value="TCP1_zeta"/>
    <property type="match status" value="1"/>
</dbReference>
<dbReference type="FunFam" id="3.30.260.10:FF:000029">
    <property type="entry name" value="Chaperonin containing TCP1 subunit 6B"/>
    <property type="match status" value="1"/>
</dbReference>
<dbReference type="FunFam" id="1.10.560.10:FF:000022">
    <property type="entry name" value="T-complex protein 1 subunit zeta"/>
    <property type="match status" value="2"/>
</dbReference>
<dbReference type="FunFam" id="3.30.260.10:FF:000017">
    <property type="entry name" value="T-complex protein 1 subunit zeta"/>
    <property type="match status" value="1"/>
</dbReference>
<dbReference type="FunFam" id="3.50.7.10:FF:000004">
    <property type="entry name" value="T-complex protein 1 subunit zeta"/>
    <property type="match status" value="1"/>
</dbReference>
<dbReference type="Gene3D" id="3.50.7.10">
    <property type="entry name" value="GroEL"/>
    <property type="match status" value="1"/>
</dbReference>
<dbReference type="Gene3D" id="1.10.560.10">
    <property type="entry name" value="GroEL-like equatorial domain"/>
    <property type="match status" value="1"/>
</dbReference>
<dbReference type="Gene3D" id="3.30.260.10">
    <property type="entry name" value="TCP-1-like chaperonin intermediate domain"/>
    <property type="match status" value="1"/>
</dbReference>
<dbReference type="InterPro" id="IPR012722">
    <property type="entry name" value="Chap_CCT_zeta"/>
</dbReference>
<dbReference type="InterPro" id="IPR017998">
    <property type="entry name" value="Chaperone_TCP-1"/>
</dbReference>
<dbReference type="InterPro" id="IPR002194">
    <property type="entry name" value="Chaperonin_TCP-1_CS"/>
</dbReference>
<dbReference type="InterPro" id="IPR002423">
    <property type="entry name" value="Cpn60/GroEL/TCP-1"/>
</dbReference>
<dbReference type="InterPro" id="IPR027409">
    <property type="entry name" value="GroEL-like_apical_dom_sf"/>
</dbReference>
<dbReference type="InterPro" id="IPR027413">
    <property type="entry name" value="GROEL-like_equatorial_sf"/>
</dbReference>
<dbReference type="InterPro" id="IPR027410">
    <property type="entry name" value="TCP-1-like_intermed_sf"/>
</dbReference>
<dbReference type="InterPro" id="IPR053374">
    <property type="entry name" value="TCP-1_chaperonin"/>
</dbReference>
<dbReference type="NCBIfam" id="TIGR02347">
    <property type="entry name" value="chap_CCT_zeta"/>
    <property type="match status" value="1"/>
</dbReference>
<dbReference type="NCBIfam" id="NF041083">
    <property type="entry name" value="thermosome_beta"/>
    <property type="match status" value="1"/>
</dbReference>
<dbReference type="PANTHER" id="PTHR11353">
    <property type="entry name" value="CHAPERONIN"/>
    <property type="match status" value="1"/>
</dbReference>
<dbReference type="Pfam" id="PF00118">
    <property type="entry name" value="Cpn60_TCP1"/>
    <property type="match status" value="1"/>
</dbReference>
<dbReference type="PRINTS" id="PR00304">
    <property type="entry name" value="TCOMPLEXTCP1"/>
</dbReference>
<dbReference type="SUPFAM" id="SSF52029">
    <property type="entry name" value="GroEL apical domain-like"/>
    <property type="match status" value="1"/>
</dbReference>
<dbReference type="SUPFAM" id="SSF48592">
    <property type="entry name" value="GroEL equatorial domain-like"/>
    <property type="match status" value="1"/>
</dbReference>
<dbReference type="SUPFAM" id="SSF54849">
    <property type="entry name" value="GroEL-intermediate domain like"/>
    <property type="match status" value="1"/>
</dbReference>
<dbReference type="PROSITE" id="PS00750">
    <property type="entry name" value="TCP1_1"/>
    <property type="match status" value="1"/>
</dbReference>
<dbReference type="PROSITE" id="PS00751">
    <property type="entry name" value="TCP1_2"/>
    <property type="match status" value="1"/>
</dbReference>
<dbReference type="PROSITE" id="PS00995">
    <property type="entry name" value="TCP1_3"/>
    <property type="match status" value="1"/>
</dbReference>
<proteinExistence type="evidence at protein level"/>
<name>TCPZ_HUMAN</name>
<evidence type="ECO:0000250" key="1">
    <source>
        <dbReference type="UniProtKB" id="P80317"/>
    </source>
</evidence>
<evidence type="ECO:0000269" key="2">
    <source>
    </source>
</evidence>
<evidence type="ECO:0000269" key="3">
    <source>
    </source>
</evidence>
<evidence type="ECO:0000269" key="4">
    <source>
    </source>
</evidence>
<evidence type="ECO:0000269" key="5">
    <source>
    </source>
</evidence>
<evidence type="ECO:0000269" key="6">
    <source>
    </source>
</evidence>
<evidence type="ECO:0000269" key="7">
    <source>
    </source>
</evidence>
<evidence type="ECO:0000269" key="8">
    <source>
    </source>
</evidence>
<evidence type="ECO:0000269" key="9">
    <source>
    </source>
</evidence>
<evidence type="ECO:0000303" key="10">
    <source>
    </source>
</evidence>
<evidence type="ECO:0000303" key="11">
    <source>
    </source>
</evidence>
<evidence type="ECO:0000305" key="12"/>
<evidence type="ECO:0000305" key="13">
    <source>
    </source>
</evidence>
<evidence type="ECO:0000305" key="14">
    <source>
    </source>
</evidence>
<evidence type="ECO:0000305" key="15">
    <source>
    </source>
</evidence>
<evidence type="ECO:0007744" key="16">
    <source>
        <dbReference type="PDB" id="7NVL"/>
    </source>
</evidence>
<evidence type="ECO:0007744" key="17">
    <source>
        <dbReference type="PDB" id="7NVM"/>
    </source>
</evidence>
<evidence type="ECO:0007744" key="18">
    <source>
        <dbReference type="PDB" id="7NVN"/>
    </source>
</evidence>
<evidence type="ECO:0007744" key="19">
    <source>
        <dbReference type="PDB" id="7NVO"/>
    </source>
</evidence>
<evidence type="ECO:0007744" key="20">
    <source>
        <dbReference type="PDB" id="7TRG"/>
    </source>
</evidence>
<evidence type="ECO:0007744" key="21">
    <source>
        <dbReference type="PDB" id="7TTN"/>
    </source>
</evidence>
<evidence type="ECO:0007744" key="22">
    <source>
        <dbReference type="PDB" id="7TTT"/>
    </source>
</evidence>
<evidence type="ECO:0007744" key="23">
    <source>
        <dbReference type="PDB" id="7TUB"/>
    </source>
</evidence>
<evidence type="ECO:0007744" key="24">
    <source>
        <dbReference type="PDB" id="7WU7"/>
    </source>
</evidence>
<evidence type="ECO:0007744" key="25">
    <source>
        <dbReference type="PDB" id="7WZ3"/>
    </source>
</evidence>
<evidence type="ECO:0007744" key="26">
    <source>
        <dbReference type="PDB" id="7X0A"/>
    </source>
</evidence>
<evidence type="ECO:0007744" key="27">
    <source>
        <dbReference type="PDB" id="7X0S"/>
    </source>
</evidence>
<evidence type="ECO:0007744" key="28">
    <source>
        <dbReference type="PDB" id="7X0V"/>
    </source>
</evidence>
<evidence type="ECO:0007744" key="29">
    <source>
        <dbReference type="PDB" id="7X3J"/>
    </source>
</evidence>
<evidence type="ECO:0007744" key="30">
    <source>
        <dbReference type="PDB" id="7X3U"/>
    </source>
</evidence>
<evidence type="ECO:0007744" key="31">
    <source>
        <dbReference type="PDB" id="7X6Q"/>
    </source>
</evidence>
<evidence type="ECO:0007744" key="32">
    <source>
        <dbReference type="PDB" id="7X7Y"/>
    </source>
</evidence>
<evidence type="ECO:0007744" key="33">
    <source>
    </source>
</evidence>
<evidence type="ECO:0007744" key="34">
    <source>
    </source>
</evidence>
<evidence type="ECO:0007744" key="35">
    <source>
    </source>
</evidence>
<evidence type="ECO:0007744" key="36">
    <source>
    </source>
</evidence>
<evidence type="ECO:0007829" key="37">
    <source>
        <dbReference type="PDB" id="7NVL"/>
    </source>
</evidence>
<evidence type="ECO:0007829" key="38">
    <source>
        <dbReference type="PDB" id="7TTT"/>
    </source>
</evidence>
<evidence type="ECO:0007829" key="39">
    <source>
        <dbReference type="PDB" id="7X0A"/>
    </source>
</evidence>
<evidence type="ECO:0007829" key="40">
    <source>
        <dbReference type="PDB" id="8I1U"/>
    </source>
</evidence>
<evidence type="ECO:0007829" key="41">
    <source>
        <dbReference type="PDB" id="8SFE"/>
    </source>
</evidence>
<evidence type="ECO:0007829" key="42">
    <source>
        <dbReference type="PDB" id="8SGL"/>
    </source>
</evidence>
<evidence type="ECO:0007829" key="43">
    <source>
        <dbReference type="PDB" id="8SHE"/>
    </source>
</evidence>
<evidence type="ECO:0007829" key="44">
    <source>
        <dbReference type="PDB" id="8SHG"/>
    </source>
</evidence>
<evidence type="ECO:0007829" key="45">
    <source>
        <dbReference type="PDB" id="8SHO"/>
    </source>
</evidence>
<accession>P40227</accession>
<accession>A6NCD2</accession>
<accession>Q3KP28</accession>
<accession>Q75LP4</accession>
<accession>Q96S46</accession>
<keyword id="KW-0002">3D-structure</keyword>
<keyword id="KW-0007">Acetylation</keyword>
<keyword id="KW-0025">Alternative splicing</keyword>
<keyword id="KW-0067">ATP-binding</keyword>
<keyword id="KW-0143">Chaperone</keyword>
<keyword id="KW-0963">Cytoplasm</keyword>
<keyword id="KW-0903">Direct protein sequencing</keyword>
<keyword id="KW-0378">Hydrolase</keyword>
<keyword id="KW-1017">Isopeptide bond</keyword>
<keyword id="KW-0547">Nucleotide-binding</keyword>
<keyword id="KW-0597">Phosphoprotein</keyword>
<keyword id="KW-1267">Proteomics identification</keyword>
<keyword id="KW-1185">Reference proteome</keyword>
<keyword id="KW-0832">Ubl conjugation</keyword>
<protein>
    <recommendedName>
        <fullName>T-complex protein 1 subunit zeta</fullName>
        <shortName>TCP-1-zeta</shortName>
        <ecNumber evidence="13 14 15">3.6.1.-</ecNumber>
    </recommendedName>
    <alternativeName>
        <fullName>Acute morphine dependence-related protein 2</fullName>
    </alternativeName>
    <alternativeName>
        <fullName>CCT-zeta-1</fullName>
    </alternativeName>
    <alternativeName>
        <fullName>Chaperonin containing T-complex polypeptide 1 subunit 6A</fullName>
    </alternativeName>
    <alternativeName>
        <fullName>HTR3</fullName>
    </alternativeName>
    <alternativeName>
        <fullName evidence="11">Tcp20</fullName>
    </alternativeName>
</protein>
<gene>
    <name type="primary">CCT6A</name>
    <name type="synonym">CCT6</name>
    <name type="synonym">CCTZ</name>
</gene>
<feature type="initiator methionine" description="Removed" evidence="2 34">
    <location>
        <position position="1"/>
    </location>
</feature>
<feature type="chain" id="PRO_0000128355" description="T-complex protein 1 subunit zeta">
    <location>
        <begin position="2"/>
        <end position="531"/>
    </location>
</feature>
<feature type="binding site" evidence="5 6 16 17 18 19 20 21 22 23">
    <location>
        <position position="39"/>
    </location>
    <ligand>
        <name>ADP</name>
        <dbReference type="ChEBI" id="CHEBI:456216"/>
    </ligand>
</feature>
<feature type="binding site" evidence="7 29">
    <location>
        <position position="39"/>
    </location>
    <ligand>
        <name>ATP</name>
        <dbReference type="ChEBI" id="CHEBI:30616"/>
    </ligand>
</feature>
<feature type="binding site" evidence="5 6 16 17 18 20 21 22">
    <location>
        <position position="90"/>
    </location>
    <ligand>
        <name>Mg(2+)</name>
        <dbReference type="ChEBI" id="CHEBI:18420"/>
    </ligand>
</feature>
<feature type="binding site" evidence="5 6 7 16 17 18 20 21 22 27 28">
    <location>
        <position position="91"/>
    </location>
    <ligand>
        <name>ADP</name>
        <dbReference type="ChEBI" id="CHEBI:456216"/>
    </ligand>
</feature>
<feature type="binding site" evidence="7 29">
    <location>
        <position position="91"/>
    </location>
    <ligand>
        <name>ATP</name>
        <dbReference type="ChEBI" id="CHEBI:30616"/>
    </ligand>
</feature>
<feature type="binding site" evidence="5 6 7 19 21 22 23 27 28">
    <location>
        <position position="92"/>
    </location>
    <ligand>
        <name>ADP</name>
        <dbReference type="ChEBI" id="CHEBI:456216"/>
    </ligand>
</feature>
<feature type="binding site" evidence="7 29">
    <location>
        <position position="92"/>
    </location>
    <ligand>
        <name>ATP</name>
        <dbReference type="ChEBI" id="CHEBI:30616"/>
    </ligand>
</feature>
<feature type="binding site" evidence="5 6 7 16 21 23 27 28">
    <location>
        <position position="93"/>
    </location>
    <ligand>
        <name>ADP</name>
        <dbReference type="ChEBI" id="CHEBI:456216"/>
    </ligand>
</feature>
<feature type="binding site" evidence="7 29">
    <location>
        <position position="93"/>
    </location>
    <ligand>
        <name>ATP</name>
        <dbReference type="ChEBI" id="CHEBI:30616"/>
    </ligand>
</feature>
<feature type="binding site" evidence="5 6 7 16 17 18 20 21 22 23 28">
    <location>
        <position position="94"/>
    </location>
    <ligand>
        <name>ADP</name>
        <dbReference type="ChEBI" id="CHEBI:456216"/>
    </ligand>
</feature>
<feature type="binding site" evidence="5 6 7 16 17 18 20 21 22 23 27 28">
    <location>
        <position position="158"/>
    </location>
    <ligand>
        <name>ADP</name>
        <dbReference type="ChEBI" id="CHEBI:456216"/>
    </ligand>
</feature>
<feature type="binding site" evidence="5 16 17 18">
    <location>
        <position position="159"/>
    </location>
    <ligand>
        <name>ADP</name>
        <dbReference type="ChEBI" id="CHEBI:456216"/>
    </ligand>
</feature>
<feature type="binding site" evidence="5 6 16 17 18 19 20 21 22 23">
    <location>
        <position position="411"/>
    </location>
    <ligand>
        <name>ADP</name>
        <dbReference type="ChEBI" id="CHEBI:456216"/>
    </ligand>
</feature>
<feature type="binding site" evidence="7 29">
    <location>
        <position position="411"/>
    </location>
    <ligand>
        <name>ATP</name>
        <dbReference type="ChEBI" id="CHEBI:30616"/>
    </ligand>
</feature>
<feature type="binding site" evidence="7 29">
    <location>
        <position position="412"/>
    </location>
    <ligand>
        <name>ATP</name>
        <dbReference type="ChEBI" id="CHEBI:30616"/>
    </ligand>
</feature>
<feature type="binding site" evidence="5 6 16 17 18 19 20 21 22">
    <location>
        <position position="496"/>
    </location>
    <ligand>
        <name>ADP</name>
        <dbReference type="ChEBI" id="CHEBI:456216"/>
    </ligand>
</feature>
<feature type="binding site" evidence="7 29">
    <location>
        <position position="496"/>
    </location>
    <ligand>
        <name>ATP</name>
        <dbReference type="ChEBI" id="CHEBI:30616"/>
    </ligand>
</feature>
<feature type="binding site" evidence="7 29">
    <location>
        <position position="501"/>
    </location>
    <ligand>
        <name>ATP</name>
        <dbReference type="ChEBI" id="CHEBI:30616"/>
    </ligand>
</feature>
<feature type="modified residue" description="N-acetylalanine" evidence="34">
    <location>
        <position position="2"/>
    </location>
</feature>
<feature type="modified residue" description="N6-acetyllysine" evidence="1">
    <location>
        <position position="5"/>
    </location>
</feature>
<feature type="modified residue" description="N6-acetyllysine" evidence="33">
    <location>
        <position position="199"/>
    </location>
</feature>
<feature type="modified residue" description="Phosphoserine" evidence="35">
    <location>
        <position position="205"/>
    </location>
</feature>
<feature type="modified residue" description="N6-acetyllysine" evidence="1">
    <location>
        <position position="287"/>
    </location>
</feature>
<feature type="modified residue" description="N6-acetyllysine" evidence="33">
    <location>
        <position position="365"/>
    </location>
</feature>
<feature type="modified residue" description="N6-acetyllysine" evidence="33">
    <location>
        <position position="377"/>
    </location>
</feature>
<feature type="modified residue" description="N6-acetyllysine" evidence="33">
    <location>
        <position position="388"/>
    </location>
</feature>
<feature type="cross-link" description="Glycyl lysine isopeptide (Lys-Gly) (interchain with G-Cter in SUMO2)" evidence="36">
    <location>
        <position position="251"/>
    </location>
</feature>
<feature type="splice variant" id="VSP_044918" description="In isoform 2." evidence="10">
    <location>
        <begin position="68"/>
        <end position="112"/>
    </location>
</feature>
<feature type="sequence variant" id="VAR_052268" description="In dbSNP:rs33922584.">
    <original>Y</original>
    <variation>C</variation>
    <location>
        <position position="229"/>
    </location>
</feature>
<feature type="sequence conflict" description="In Ref. 3; BAB61032." evidence="12" ref="3">
    <original>SLD</original>
    <variation>PLS</variation>
    <location>
        <begin position="301"/>
        <end position="303"/>
    </location>
</feature>
<feature type="helix" evidence="37">
    <location>
        <begin position="3"/>
        <end position="7"/>
    </location>
</feature>
<feature type="strand" evidence="45">
    <location>
        <begin position="8"/>
        <end position="10"/>
    </location>
</feature>
<feature type="strand" evidence="37">
    <location>
        <begin position="12"/>
        <end position="14"/>
    </location>
</feature>
<feature type="helix" evidence="37">
    <location>
        <begin position="16"/>
        <end position="34"/>
    </location>
</feature>
<feature type="helix" evidence="37">
    <location>
        <begin position="35"/>
        <end position="37"/>
    </location>
</feature>
<feature type="strand" evidence="39">
    <location>
        <begin position="38"/>
        <end position="42"/>
    </location>
</feature>
<feature type="strand" evidence="37">
    <location>
        <begin position="44"/>
        <end position="48"/>
    </location>
</feature>
<feature type="strand" evidence="39">
    <location>
        <begin position="50"/>
        <end position="52"/>
    </location>
</feature>
<feature type="strand" evidence="37">
    <location>
        <begin position="54"/>
        <end position="57"/>
    </location>
</feature>
<feature type="helix" evidence="37">
    <location>
        <begin position="60"/>
        <end position="66"/>
    </location>
</feature>
<feature type="helix" evidence="37">
    <location>
        <begin position="72"/>
        <end position="88"/>
    </location>
</feature>
<feature type="helix" evidence="37">
    <location>
        <begin position="92"/>
        <end position="110"/>
    </location>
</feature>
<feature type="turn" evidence="37">
    <location>
        <begin position="111"/>
        <end position="113"/>
    </location>
</feature>
<feature type="helix" evidence="37">
    <location>
        <begin position="116"/>
        <end position="137"/>
    </location>
</feature>
<feature type="helix" evidence="37">
    <location>
        <begin position="145"/>
        <end position="159"/>
    </location>
</feature>
<feature type="helix" evidence="37">
    <location>
        <begin position="162"/>
        <end position="179"/>
    </location>
</feature>
<feature type="strand" evidence="43">
    <location>
        <begin position="182"/>
        <end position="184"/>
    </location>
</feature>
<feature type="helix" evidence="37">
    <location>
        <begin position="188"/>
        <end position="190"/>
    </location>
</feature>
<feature type="strand" evidence="37">
    <location>
        <begin position="191"/>
        <end position="196"/>
    </location>
</feature>
<feature type="helix" evidence="37">
    <location>
        <begin position="201"/>
        <end position="203"/>
    </location>
</feature>
<feature type="strand" evidence="37">
    <location>
        <begin position="205"/>
        <end position="213"/>
    </location>
</feature>
<feature type="strand" evidence="41">
    <location>
        <begin position="219"/>
        <end position="221"/>
    </location>
</feature>
<feature type="strand" evidence="37">
    <location>
        <begin position="223"/>
        <end position="233"/>
    </location>
</feature>
<feature type="turn" evidence="40">
    <location>
        <begin position="243"/>
        <end position="245"/>
    </location>
</feature>
<feature type="strand" evidence="37">
    <location>
        <begin position="248"/>
        <end position="252"/>
    </location>
</feature>
<feature type="helix" evidence="37">
    <location>
        <begin position="253"/>
        <end position="262"/>
    </location>
</feature>
<feature type="helix" evidence="37">
    <location>
        <begin position="265"/>
        <end position="281"/>
    </location>
</feature>
<feature type="strand" evidence="37">
    <location>
        <begin position="283"/>
        <end position="295"/>
    </location>
</feature>
<feature type="helix" evidence="37">
    <location>
        <begin position="299"/>
        <end position="307"/>
    </location>
</feature>
<feature type="strand" evidence="37">
    <location>
        <begin position="310"/>
        <end position="313"/>
    </location>
</feature>
<feature type="helix" evidence="37">
    <location>
        <begin position="318"/>
        <end position="327"/>
    </location>
</feature>
<feature type="strand" evidence="38">
    <location>
        <begin position="332"/>
        <end position="334"/>
    </location>
</feature>
<feature type="strand" evidence="42">
    <location>
        <begin position="336"/>
        <end position="338"/>
    </location>
</feature>
<feature type="helix" evidence="37">
    <location>
        <begin position="341"/>
        <end position="343"/>
    </location>
</feature>
<feature type="strand" evidence="37">
    <location>
        <begin position="345"/>
        <end position="355"/>
    </location>
</feature>
<feature type="strand" evidence="37">
    <location>
        <begin position="358"/>
        <end position="364"/>
    </location>
</feature>
<feature type="strand" evidence="37">
    <location>
        <begin position="372"/>
        <end position="377"/>
    </location>
</feature>
<feature type="helix" evidence="37">
    <location>
        <begin position="381"/>
        <end position="403"/>
    </location>
</feature>
<feature type="strand" evidence="37">
    <location>
        <begin position="404"/>
        <end position="409"/>
    </location>
</feature>
<feature type="turn" evidence="37">
    <location>
        <begin position="410"/>
        <end position="412"/>
    </location>
</feature>
<feature type="helix" evidence="37">
    <location>
        <begin position="413"/>
        <end position="425"/>
    </location>
</feature>
<feature type="helix" evidence="37">
    <location>
        <begin position="426"/>
        <end position="428"/>
    </location>
</feature>
<feature type="helix" evidence="37">
    <location>
        <begin position="433"/>
        <end position="444"/>
    </location>
</feature>
<feature type="helix" evidence="37">
    <location>
        <begin position="446"/>
        <end position="455"/>
    </location>
</feature>
<feature type="helix" evidence="37">
    <location>
        <begin position="459"/>
        <end position="473"/>
    </location>
</feature>
<feature type="strand" evidence="37">
    <location>
        <begin position="477"/>
        <end position="479"/>
    </location>
</feature>
<feature type="turn" evidence="37">
    <location>
        <begin position="481"/>
        <end position="483"/>
    </location>
</feature>
<feature type="strand" evidence="37">
    <location>
        <begin position="485"/>
        <end position="488"/>
    </location>
</feature>
<feature type="helix" evidence="37">
    <location>
        <begin position="489"/>
        <end position="492"/>
    </location>
</feature>
<feature type="strand" evidence="44">
    <location>
        <begin position="495"/>
        <end position="497"/>
    </location>
</feature>
<feature type="helix" evidence="37">
    <location>
        <begin position="498"/>
        <end position="516"/>
    </location>
</feature>
<feature type="strand" evidence="37">
    <location>
        <begin position="518"/>
        <end position="523"/>
    </location>
</feature>
<reference key="1">
    <citation type="journal article" date="1994" name="J. Biol. Chem.">
        <title>Tcp20, a subunit of the eukaryotic TRiC chaperonin from humans and yeast.</title>
        <authorList>
            <person name="Li W.-Z."/>
            <person name="Lin P."/>
            <person name="Frydman J."/>
            <person name="Boal T.R."/>
            <person name="Cardillo T.S."/>
            <person name="Richard L.M."/>
            <person name="Toth D."/>
            <person name="Lichtman M.A."/>
            <person name="Hartl F.-U."/>
            <person name="Sherman F."/>
            <person name="Segel G.B."/>
        </authorList>
    </citation>
    <scope>NUCLEOTIDE SEQUENCE [MRNA] (ISOFORM 1)</scope>
    <scope>PROTEIN SEQUENCE OF 324-339</scope>
    <scope>SUBCELLULAR LOCATION</scope>
</reference>
<reference key="2">
    <citation type="submission" date="2001-05" db="EMBL/GenBank/DDBJ databases">
        <title>Homo sapiens chaperonin mRNA sequence.</title>
        <authorList>
            <person name="Lee Y.-K."/>
            <person name="Yoo Y.-D."/>
        </authorList>
    </citation>
    <scope>NUCLEOTIDE SEQUENCE [MRNA] (ISOFORM 1)</scope>
</reference>
<reference key="3">
    <citation type="submission" date="2001-06" db="EMBL/GenBank/DDBJ databases">
        <title>Homo sapiens chaperonin (MoDP) mRNA expressed in SH-SY5Y neuroblastoma cells.</title>
        <authorList>
            <person name="Wang H."/>
            <person name="Gao X."/>
            <person name="Li L."/>
            <person name="Wang B."/>
            <person name="Huang Y."/>
            <person name="Han J."/>
        </authorList>
    </citation>
    <scope>NUCLEOTIDE SEQUENCE [MRNA] (ISOFORM 1)</scope>
</reference>
<reference key="4">
    <citation type="journal article" date="2003" name="Nature">
        <title>The DNA sequence of human chromosome 7.</title>
        <authorList>
            <person name="Hillier L.W."/>
            <person name="Fulton R.S."/>
            <person name="Fulton L.A."/>
            <person name="Graves T.A."/>
            <person name="Pepin K.H."/>
            <person name="Wagner-McPherson C."/>
            <person name="Layman D."/>
            <person name="Maas J."/>
            <person name="Jaeger S."/>
            <person name="Walker R."/>
            <person name="Wylie K."/>
            <person name="Sekhon M."/>
            <person name="Becker M.C."/>
            <person name="O'Laughlin M.D."/>
            <person name="Schaller M.E."/>
            <person name="Fewell G.A."/>
            <person name="Delehaunty K.D."/>
            <person name="Miner T.L."/>
            <person name="Nash W.E."/>
            <person name="Cordes M."/>
            <person name="Du H."/>
            <person name="Sun H."/>
            <person name="Edwards J."/>
            <person name="Bradshaw-Cordum H."/>
            <person name="Ali J."/>
            <person name="Andrews S."/>
            <person name="Isak A."/>
            <person name="Vanbrunt A."/>
            <person name="Nguyen C."/>
            <person name="Du F."/>
            <person name="Lamar B."/>
            <person name="Courtney L."/>
            <person name="Kalicki J."/>
            <person name="Ozersky P."/>
            <person name="Bielicki L."/>
            <person name="Scott K."/>
            <person name="Holmes A."/>
            <person name="Harkins R."/>
            <person name="Harris A."/>
            <person name="Strong C.M."/>
            <person name="Hou S."/>
            <person name="Tomlinson C."/>
            <person name="Dauphin-Kohlberg S."/>
            <person name="Kozlowicz-Reilly A."/>
            <person name="Leonard S."/>
            <person name="Rohlfing T."/>
            <person name="Rock S.M."/>
            <person name="Tin-Wollam A.-M."/>
            <person name="Abbott A."/>
            <person name="Minx P."/>
            <person name="Maupin R."/>
            <person name="Strowmatt C."/>
            <person name="Latreille P."/>
            <person name="Miller N."/>
            <person name="Johnson D."/>
            <person name="Murray J."/>
            <person name="Woessner J.P."/>
            <person name="Wendl M.C."/>
            <person name="Yang S.-P."/>
            <person name="Schultz B.R."/>
            <person name="Wallis J.W."/>
            <person name="Spieth J."/>
            <person name="Bieri T.A."/>
            <person name="Nelson J.O."/>
            <person name="Berkowicz N."/>
            <person name="Wohldmann P.E."/>
            <person name="Cook L.L."/>
            <person name="Hickenbotham M.T."/>
            <person name="Eldred J."/>
            <person name="Williams D."/>
            <person name="Bedell J.A."/>
            <person name="Mardis E.R."/>
            <person name="Clifton S.W."/>
            <person name="Chissoe S.L."/>
            <person name="Marra M.A."/>
            <person name="Raymond C."/>
            <person name="Haugen E."/>
            <person name="Gillett W."/>
            <person name="Zhou Y."/>
            <person name="James R."/>
            <person name="Phelps K."/>
            <person name="Iadanoto S."/>
            <person name="Bubb K."/>
            <person name="Simms E."/>
            <person name="Levy R."/>
            <person name="Clendenning J."/>
            <person name="Kaul R."/>
            <person name="Kent W.J."/>
            <person name="Furey T.S."/>
            <person name="Baertsch R.A."/>
            <person name="Brent M.R."/>
            <person name="Keibler E."/>
            <person name="Flicek P."/>
            <person name="Bork P."/>
            <person name="Suyama M."/>
            <person name="Bailey J.A."/>
            <person name="Portnoy M.E."/>
            <person name="Torrents D."/>
            <person name="Chinwalla A.T."/>
            <person name="Gish W.R."/>
            <person name="Eddy S.R."/>
            <person name="McPherson J.D."/>
            <person name="Olson M.V."/>
            <person name="Eichler E.E."/>
            <person name="Green E.D."/>
            <person name="Waterston R.H."/>
            <person name="Wilson R.K."/>
        </authorList>
    </citation>
    <scope>NUCLEOTIDE SEQUENCE [LARGE SCALE GENOMIC DNA]</scope>
</reference>
<reference key="5">
    <citation type="journal article" date="2004" name="Genome Res.">
        <title>The status, quality, and expansion of the NIH full-length cDNA project: the Mammalian Gene Collection (MGC).</title>
        <authorList>
            <consortium name="The MGC Project Team"/>
        </authorList>
    </citation>
    <scope>NUCLEOTIDE SEQUENCE [LARGE SCALE MRNA] (ISOFORM 1)</scope>
    <scope>NUCLEOTIDE SEQUENCE [LARGE SCALE MRNA] OF 1-233 (ISOFORM 2)</scope>
    <source>
        <tissue>Lung carcinoma</tissue>
    </source>
</reference>
<reference key="6">
    <citation type="journal article" date="1992" name="Proc. Natl. Acad. Sci. U.S.A.">
        <title>Isolation of a gene encoding a chaperonin-like protein by complementation of yeast amino acid transport mutants with human cDNA.</title>
        <authorList>
            <person name="Segel G.B."/>
            <person name="Boal T.R."/>
            <person name="Cardillo T.S."/>
            <person name="Murant F.G."/>
            <person name="Lichtman M.A."/>
            <person name="Sherman F."/>
        </authorList>
    </citation>
    <scope>NUCLEOTIDE SEQUENCE [MRNA] OF 98-531 (ISOFORM 1)</scope>
    <source>
        <tissue>B-cell</tissue>
    </source>
</reference>
<reference key="7">
    <citation type="journal article" date="2003" name="Nat. Biotechnol.">
        <title>Exploring proteomes and analyzing protein processing by mass spectrometric identification of sorted N-terminal peptides.</title>
        <authorList>
            <person name="Gevaert K."/>
            <person name="Goethals M."/>
            <person name="Martens L."/>
            <person name="Van Damme J."/>
            <person name="Staes A."/>
            <person name="Thomas G.R."/>
            <person name="Vandekerckhove J."/>
        </authorList>
    </citation>
    <scope>PROTEIN SEQUENCE OF 2-15</scope>
    <source>
        <tissue>Platelet</tissue>
    </source>
</reference>
<reference key="8">
    <citation type="submission" date="2007-03" db="UniProtKB">
        <authorList>
            <person name="Lubec G."/>
            <person name="Vishwanath V."/>
        </authorList>
    </citation>
    <scope>PROTEIN SEQUENCE OF 105-117 AND 160-180</scope>
    <scope>IDENTIFICATION BY MASS SPECTROMETRY</scope>
    <source>
        <tissue>Brain</tissue>
        <tissue>Cajal-Retzius cell</tissue>
    </source>
</reference>
<reference key="9">
    <citation type="journal article" date="2003" name="J. Biol. Chem.">
        <title>A product of the human gene adjacent to parkin is a component of Lewy bodies and suppresses Pael receptor-induced cell death.</title>
        <authorList>
            <person name="Imai Y."/>
            <person name="Soda M."/>
            <person name="Murakami T."/>
            <person name="Shoji M."/>
            <person name="Abe K."/>
            <person name="Takahashi R."/>
        </authorList>
    </citation>
    <scope>INTERACTION WITH PACRG</scope>
</reference>
<reference key="10">
    <citation type="journal article" date="2009" name="Science">
        <title>Lysine acetylation targets protein complexes and co-regulates major cellular functions.</title>
        <authorList>
            <person name="Choudhary C."/>
            <person name="Kumar C."/>
            <person name="Gnad F."/>
            <person name="Nielsen M.L."/>
            <person name="Rehman M."/>
            <person name="Walther T.C."/>
            <person name="Olsen J.V."/>
            <person name="Mann M."/>
        </authorList>
    </citation>
    <scope>ACETYLATION [LARGE SCALE ANALYSIS] AT LYS-199; LYS-365; LYS-377 AND LYS-388</scope>
    <scope>IDENTIFICATION BY MASS SPECTROMETRY [LARGE SCALE ANALYSIS]</scope>
</reference>
<reference key="11">
    <citation type="journal article" date="2011" name="BMC Syst. Biol.">
        <title>Initial characterization of the human central proteome.</title>
        <authorList>
            <person name="Burkard T.R."/>
            <person name="Planyavsky M."/>
            <person name="Kaupe I."/>
            <person name="Breitwieser F.P."/>
            <person name="Buerckstuemmer T."/>
            <person name="Bennett K.L."/>
            <person name="Superti-Furga G."/>
            <person name="Colinge J."/>
        </authorList>
    </citation>
    <scope>IDENTIFICATION BY MASS SPECTROMETRY [LARGE SCALE ANALYSIS]</scope>
</reference>
<reference key="12">
    <citation type="journal article" date="2012" name="Proc. Natl. Acad. Sci. U.S.A.">
        <title>N-terminal acetylome analyses and functional insights of the N-terminal acetyltransferase NatB.</title>
        <authorList>
            <person name="Van Damme P."/>
            <person name="Lasa M."/>
            <person name="Polevoda B."/>
            <person name="Gazquez C."/>
            <person name="Elosegui-Artola A."/>
            <person name="Kim D.S."/>
            <person name="De Juan-Pardo E."/>
            <person name="Demeyer K."/>
            <person name="Hole K."/>
            <person name="Larrea E."/>
            <person name="Timmerman E."/>
            <person name="Prieto J."/>
            <person name="Arnesen T."/>
            <person name="Sherman F."/>
            <person name="Gevaert K."/>
            <person name="Aldabe R."/>
        </authorList>
    </citation>
    <scope>ACETYLATION [LARGE SCALE ANALYSIS] AT ALA-2</scope>
    <scope>CLEAVAGE OF INITIATOR METHIONINE [LARGE SCALE ANALYSIS]</scope>
    <scope>IDENTIFICATION BY MASS SPECTROMETRY [LARGE SCALE ANALYSIS]</scope>
</reference>
<reference key="13">
    <citation type="journal article" date="2013" name="J. Proteome Res.">
        <title>Toward a comprehensive characterization of a human cancer cell phosphoproteome.</title>
        <authorList>
            <person name="Zhou H."/>
            <person name="Di Palma S."/>
            <person name="Preisinger C."/>
            <person name="Peng M."/>
            <person name="Polat A.N."/>
            <person name="Heck A.J."/>
            <person name="Mohammed S."/>
        </authorList>
    </citation>
    <scope>PHOSPHORYLATION [LARGE SCALE ANALYSIS] AT SER-205</scope>
    <scope>IDENTIFICATION BY MASS SPECTROMETRY [LARGE SCALE ANALYSIS]</scope>
    <source>
        <tissue>Erythroleukemia</tissue>
    </source>
</reference>
<reference key="14">
    <citation type="journal article" date="2014" name="Cell">
        <title>Proteostatic control of telomerase function through TRiC-mediated folding of TCAB1.</title>
        <authorList>
            <person name="Freund A."/>
            <person name="Zhong F.L."/>
            <person name="Venteicher A.S."/>
            <person name="Meng Z."/>
            <person name="Veenstra T.D."/>
            <person name="Frydman J."/>
            <person name="Artandi S.E."/>
        </authorList>
    </citation>
    <scope>FUNCTION</scope>
    <scope>IDENTIFICATION IN THE CHAPERONIN-CONTAINING T-COMPLEX</scope>
</reference>
<reference key="15">
    <citation type="journal article" date="2014" name="J. Proteomics">
        <title>An enzyme assisted RP-RPLC approach for in-depth analysis of human liver phosphoproteome.</title>
        <authorList>
            <person name="Bian Y."/>
            <person name="Song C."/>
            <person name="Cheng K."/>
            <person name="Dong M."/>
            <person name="Wang F."/>
            <person name="Huang J."/>
            <person name="Sun D."/>
            <person name="Wang L."/>
            <person name="Ye M."/>
            <person name="Zou H."/>
        </authorList>
    </citation>
    <scope>IDENTIFICATION BY MASS SPECTROMETRY [LARGE SCALE ANALYSIS]</scope>
    <source>
        <tissue>Liver</tissue>
    </source>
</reference>
<reference key="16">
    <citation type="journal article" date="2015" name="Proteomics">
        <title>N-terminome analysis of the human mitochondrial proteome.</title>
        <authorList>
            <person name="Vaca Jacome A.S."/>
            <person name="Rabilloud T."/>
            <person name="Schaeffer-Reiss C."/>
            <person name="Rompais M."/>
            <person name="Ayoub D."/>
            <person name="Lane L."/>
            <person name="Bairoch A."/>
            <person name="Van Dorsselaer A."/>
            <person name="Carapito C."/>
        </authorList>
    </citation>
    <scope>IDENTIFICATION BY MASS SPECTROMETRY [LARGE SCALE ANALYSIS]</scope>
</reference>
<reference key="17">
    <citation type="journal article" date="2017" name="Nat. Struct. Mol. Biol.">
        <title>Site-specific mapping of the human SUMO proteome reveals co-modification with phosphorylation.</title>
        <authorList>
            <person name="Hendriks I.A."/>
            <person name="Lyon D."/>
            <person name="Young C."/>
            <person name="Jensen L.J."/>
            <person name="Vertegaal A.C."/>
            <person name="Nielsen M.L."/>
        </authorList>
    </citation>
    <scope>SUMOYLATION [LARGE SCALE ANALYSIS] AT LYS-251</scope>
    <scope>IDENTIFICATION BY MASS SPECTROMETRY [LARGE SCALE ANALYSIS]</scope>
</reference>
<reference evidence="20 21 22 23 24" key="18">
    <citation type="journal article" date="2022" name="Cell">
        <title>Structural visualization of the tubulin folding pathway directed by human chaperonin TRiC/CCT.</title>
        <authorList>
            <person name="Gestaut D."/>
            <person name="Zhao Y."/>
            <person name="Park J."/>
            <person name="Ma B."/>
            <person name="Leitner A."/>
            <person name="Collier M."/>
            <person name="Pintilie G."/>
            <person name="Roh S.H."/>
            <person name="Chiu W."/>
            <person name="Frydman J."/>
        </authorList>
    </citation>
    <scope>STRUCTURE BY ELECTRON MICROSCOPY (2.90 ANGSTROMS) IN COMPLEX WITH TUBULIN</scope>
    <scope>FUNCTION</scope>
    <scope>SUBUNIT</scope>
    <scope>ADP AND MG(2+) BINDING SITES</scope>
    <scope>CATALYTIC ACTIVITY</scope>
</reference>
<reference evidence="16 17 18 19" key="19">
    <citation type="journal article" date="2022" name="Nat. Struct. Mol. Biol.">
        <title>Snapshots of actin and tubulin folding inside the TRiC chaperonin.</title>
        <authorList>
            <person name="Kelly J.J."/>
            <person name="Tranter D."/>
            <person name="Pardon E."/>
            <person name="Chi G."/>
            <person name="Kramer H."/>
            <person name="Happonen L."/>
            <person name="Knee K.M."/>
            <person name="Janz J.M."/>
            <person name="Steyaert J."/>
            <person name="Bulawa C."/>
            <person name="Paavilainen V.O."/>
            <person name="Huiskonen J.T."/>
            <person name="Yue W.W."/>
        </authorList>
    </citation>
    <scope>STRUCTURE BY ELECTRON MICROSCOPY (2.50 ANGSTROMS) IN COMPLEX WITH TUBULIN AND IN COMPLEX WITH ACTIN</scope>
    <scope>FUNCTION</scope>
    <scope>SUBUNIT</scope>
    <scope>ADP AND MG(2+) BINDING SITES</scope>
    <scope>CATALYTIC ACTIVITY</scope>
</reference>
<reference evidence="25 26 27 28 29 30 31 32" key="20">
    <citation type="journal article" date="2023" name="Commun. Biol.">
        <title>Pathway and mechanism of tubulin folding mediated by TRiC/CCT along its ATPase cycle revealed using cryo-EM.</title>
        <authorList>
            <person name="Liu C."/>
            <person name="Jin M."/>
            <person name="Wang S."/>
            <person name="Han W."/>
            <person name="Zhao Q."/>
            <person name="Wang Y."/>
            <person name="Xu C."/>
            <person name="Diao L."/>
            <person name="Yin Y."/>
            <person name="Peng C."/>
            <person name="Peng C."/>
            <person name="Bao L."/>
            <person name="Wang Y."/>
            <person name="Cong Y."/>
        </authorList>
    </citation>
    <scope>STRUCTURE BY ELECTRON MICROSCOPY (3.10 ANGSTROMS) IN COMPLEX WITH TUBULIN</scope>
    <scope>FUNCTION</scope>
    <scope>SUBUNIT</scope>
    <scope>ATP; ADP AND MG(2+) BINDING SITES</scope>
    <scope>CATALYTIC ACTIVITY</scope>
</reference>
<reference key="21">
    <citation type="journal article" date="2024" name="Science">
        <title>Brain malformations and seizures by impaired chaperonin function of TRiC.</title>
        <authorList>
            <person name="Kraft F."/>
            <person name="Rodriguez-Aliaga P."/>
            <person name="Yuan W."/>
            <person name="Franken L."/>
            <person name="Zajt K."/>
            <person name="Hasan D."/>
            <person name="Lee T.T."/>
            <person name="Flex E."/>
            <person name="Hentschel A."/>
            <person name="Innes A.M."/>
            <person name="Zheng B."/>
            <person name="Julia Suh D.S."/>
            <person name="Knopp C."/>
            <person name="Lausberg E."/>
            <person name="Krause J."/>
            <person name="Zhang X."/>
            <person name="Trapane P."/>
            <person name="Carroll R."/>
            <person name="McClatchey M."/>
            <person name="Fry A.E."/>
            <person name="Wang L."/>
            <person name="Giesselmann S."/>
            <person name="Hoang H."/>
            <person name="Baldridge D."/>
            <person name="Silverman G.A."/>
            <person name="Radio F.C."/>
            <person name="Bertini E."/>
            <person name="Ciolfi A."/>
            <person name="Blood K.A."/>
            <person name="de Sainte Agathe J.M."/>
            <person name="Charles P."/>
            <person name="Bergant G."/>
            <person name="Cuturilo G."/>
            <person name="Peterlin B."/>
            <person name="Diderich K."/>
            <person name="Streff H."/>
            <person name="Robak L."/>
            <person name="Oegema R."/>
            <person name="van Binsbergen E."/>
            <person name="Herriges J."/>
            <person name="Saunders C.J."/>
            <person name="Maier A."/>
            <person name="Wolking S."/>
            <person name="Weber Y."/>
            <person name="Lochmueller H."/>
            <person name="Meyer S."/>
            <person name="Aleman A."/>
            <person name="Polavarapu K."/>
            <person name="Nicolas G."/>
            <person name="Goldenberg A."/>
            <person name="Guyant L."/>
            <person name="Pope K."/>
            <person name="Hehmeyer K.N."/>
            <person name="Monaghan K.G."/>
            <person name="Quade A."/>
            <person name="Smol T."/>
            <person name="Caumes R."/>
            <person name="Duerinckx S."/>
            <person name="Depondt C."/>
            <person name="Van Paesschen W."/>
            <person name="Rieubland C."/>
            <person name="Poloni C."/>
            <person name="Guipponi M."/>
            <person name="Arcioni S."/>
            <person name="Meuwissen M."/>
            <person name="Jansen A.C."/>
            <person name="Rosenblum J."/>
            <person name="Haack T.B."/>
            <person name="Bertrand M."/>
            <person name="Gerstner L."/>
            <person name="Magg J."/>
            <person name="Riess O."/>
            <person name="Schulz J.B."/>
            <person name="Wagner N."/>
            <person name="Wiesmann M."/>
            <person name="Weis J."/>
            <person name="Eggermann T."/>
            <person name="Begemann M."/>
            <person name="Roos A."/>
            <person name="Haeusler M."/>
            <person name="Schedl T."/>
            <person name="Tartaglia M."/>
            <person name="Bremer J."/>
            <person name="Pak S.C."/>
            <person name="Frydman J."/>
            <person name="Elbracht M."/>
            <person name="Kurth I."/>
        </authorList>
    </citation>
    <scope>INVOLVEMENT IN BRAIN DEVELOPMENTAL DISORDERS</scope>
</reference>
<comment type="function">
    <text evidence="4 5 6 7">Component of the chaperonin-containing T-complex (TRiC), a molecular chaperone complex that assists the folding of actin, tubulin and other proteins upon ATP hydrolysis (PubMed:25467444, PubMed:36493755, PubMed:35449234, PubMed:37193829). The TRiC complex mediates the folding of WRAP53/TCAB1, thereby regulating telomere maintenance (PubMed:25467444).</text>
</comment>
<comment type="catalytic activity">
    <reaction evidence="13 14 15">
        <text>ATP + H2O = ADP + phosphate + H(+)</text>
        <dbReference type="Rhea" id="RHEA:13065"/>
        <dbReference type="ChEBI" id="CHEBI:15377"/>
        <dbReference type="ChEBI" id="CHEBI:15378"/>
        <dbReference type="ChEBI" id="CHEBI:30616"/>
        <dbReference type="ChEBI" id="CHEBI:43474"/>
        <dbReference type="ChEBI" id="CHEBI:456216"/>
    </reaction>
</comment>
<comment type="subunit">
    <text evidence="3 4 5 6 7">Component of the chaperonin-containing T-complex (TRiC), a hexadecamer composed of two identical back-to-back stacked rings enclosing a protein folding chamber (PubMed:25467444, PubMed:36493755, PubMed:35449234, PubMed:37193829). Each ring is made up of eight different subunits: TCP1/CCT1, CCT2, CCT3, CCT4, CCT5, CCT6A/CCT6, CCT7, CCT8 (PubMed:36493755, PubMed:35449234, PubMed:37193829). Interacts with PACRG (PubMed:14532270).</text>
</comment>
<comment type="interaction">
    <interactant intactId="EBI-356687">
        <id>P40227</id>
    </interactant>
    <interactant intactId="EBI-77613">
        <id>P05067</id>
        <label>APP</label>
    </interactant>
    <organismsDiffer>false</organismsDiffer>
    <experiments>3</experiments>
</comment>
<comment type="interaction">
    <interactant intactId="EBI-356687">
        <id>P40227</id>
    </interactant>
    <interactant intactId="EBI-21499901">
        <id>P42331-2</id>
        <label>ARHGAP25</label>
    </interactant>
    <organismsDiffer>false</organismsDiffer>
    <experiments>3</experiments>
</comment>
<comment type="interaction">
    <interactant intactId="EBI-356687">
        <id>P40227</id>
    </interactant>
    <interactant intactId="EBI-930964">
        <id>P54253</id>
        <label>ATXN1</label>
    </interactant>
    <organismsDiffer>false</organismsDiffer>
    <experiments>3</experiments>
</comment>
<comment type="interaction">
    <interactant intactId="EBI-356687">
        <id>P40227</id>
    </interactant>
    <interactant intactId="EBI-946046">
        <id>P54252</id>
        <label>ATXN3</label>
    </interactant>
    <organismsDiffer>false</organismsDiffer>
    <experiments>3</experiments>
</comment>
<comment type="interaction">
    <interactant intactId="EBI-356687">
        <id>P40227</id>
    </interactant>
    <interactant intactId="EBI-2837444">
        <id>Q8WUW1</id>
        <label>BRK1</label>
    </interactant>
    <organismsDiffer>false</organismsDiffer>
    <experiments>3</experiments>
</comment>
<comment type="interaction">
    <interactant intactId="EBI-356687">
        <id>P40227</id>
    </interactant>
    <interactant intactId="EBI-356507">
        <id>P50990</id>
        <label>CCT8</label>
    </interactant>
    <organismsDiffer>false</organismsDiffer>
    <experiments>6</experiments>
</comment>
<comment type="interaction">
    <interactant intactId="EBI-356687">
        <id>P40227</id>
    </interactant>
    <interactant intactId="EBI-466029">
        <id>P42858</id>
        <label>HTT</label>
    </interactant>
    <organismsDiffer>false</organismsDiffer>
    <experiments>10</experiments>
</comment>
<comment type="interaction">
    <interactant intactId="EBI-356687">
        <id>P40227</id>
    </interactant>
    <interactant intactId="EBI-721115">
        <id>Q8NCC3</id>
        <label>PLA2G15</label>
    </interactant>
    <organismsDiffer>false</organismsDiffer>
    <experiments>2</experiments>
</comment>
<comment type="interaction">
    <interactant intactId="EBI-356687">
        <id>P40227</id>
    </interactant>
    <interactant intactId="EBI-476586">
        <id>P17612</id>
        <label>PRKACA</label>
    </interactant>
    <organismsDiffer>false</organismsDiffer>
    <experiments>3</experiments>
</comment>
<comment type="interaction">
    <interactant intactId="EBI-356687">
        <id>P40227</id>
    </interactant>
    <interactant intactId="EBI-12938570">
        <id>Q16560-2</id>
        <label>SNRNP35</label>
    </interactant>
    <organismsDiffer>false</organismsDiffer>
    <experiments>3</experiments>
</comment>
<comment type="interaction">
    <interactant intactId="EBI-356687">
        <id>P40227</id>
    </interactant>
    <interactant intactId="EBI-296151">
        <id>P37173</id>
        <label>TGFBR2</label>
    </interactant>
    <organismsDiffer>false</organismsDiffer>
    <experiments>3</experiments>
</comment>
<comment type="interaction">
    <interactant intactId="EBI-356687">
        <id>P40227</id>
    </interactant>
    <interactant intactId="EBI-747544">
        <id>Q9BZY9</id>
        <label>TRIM31</label>
    </interactant>
    <organismsDiffer>false</organismsDiffer>
    <experiments>3</experiments>
</comment>
<comment type="subcellular location">
    <subcellularLocation>
        <location evidence="9">Cytoplasm</location>
    </subcellularLocation>
</comment>
<comment type="alternative products">
    <event type="alternative splicing"/>
    <isoform>
        <id>P40227-1</id>
        <name>1</name>
        <sequence type="displayed"/>
    </isoform>
    <isoform>
        <id>P40227-2</id>
        <name>2</name>
        <sequence type="described" ref="VSP_044918"/>
    </isoform>
</comment>
<comment type="disease">
    <text evidence="8">De novo genetic variants in nearly every subunit of the TRiC complex, including CCT6A, have been found in individuals with a broad spectrum of brain malformations, and clinical phenotypes ranging from mild to severe epilepsy, developmental delay, intellectual disability, ataxia, and other features of cerebral malfunction.</text>
</comment>
<comment type="similarity">
    <text evidence="12">Belongs to the TCP-1 chaperonin family.</text>
</comment>
<comment type="sequence caution" evidence="12">
    <conflict type="erroneous initiation">
        <sequence resource="EMBL-CDS" id="AAA58676"/>
    </conflict>
</comment>
<comment type="sequence caution" evidence="12">
    <conflict type="miscellaneous discrepancy">
        <sequence resource="EMBL" id="BU540578"/>
    </conflict>
    <text>Several sequencing errors.</text>
</comment>